<sequence>MSLPTEVETYVLSIVPSGPLKDEVAQGLEGVFAGKNTDLEVLLEWLKTRPILSPLTKGILGFVFTLTVPGERGLQRRRFVQNALNGNGDPNNMDKAVKLYGKLKREITFHGAKEVALSYSAGALASCMGLIYNRMGTVTTEVAFGLVCATCEQIADSQHRSHRQMVTTTNPLIRHENRMVLVSTTAKAMEQMAGSSEQAAEAMEVASQARQMIQAMRTIGIHPSCGAGLKDDLLENLQAYQKRMGVQMQRFK</sequence>
<comment type="function">
    <text evidence="1">Plays critical roles in virus replication, from virus entry and uncoating to assembly and budding of the virus particle. M1 binding to ribonucleocapsids (RNPs) in nucleus seems to inhibit viral transcription. Interaction of viral NEP with M1-RNP is thought to promote nuclear export of the complex, which is targeted to the virion assembly site at the apical plasma membrane in polarized epithelial cells. Interactions with NA and HA may bring M1, a non-raft-associated protein, into lipid rafts. Forms a continuous shell on the inner side of the lipid bilayer in virion, where it binds the RNP. During virus entry into cell, the M2 ion channel acidifies the internal virion core, inducing M1 dissociation from the RNP. M1-free RNPs are transported to the nucleus, where viral transcription and replication can take place.</text>
</comment>
<comment type="function">
    <text evidence="1">Determines the virion's shape: spherical or filamentous. Clinical isolates of influenza are characterized by the presence of significant proportion of filamentous virions, whereas after multiple passage on eggs or cell culture, virions have only spherical morphology. Filamentous virions are thought to be important to infect neighboring cells, and spherical virions more suited to spread through aerosol between hosts organisms.</text>
</comment>
<comment type="subunit">
    <text evidence="1">Homodimer and homomultimer. Interacts with NEP. Binds ribonucleocapsid by both interacting with genomic RNA and NP protein. May interact with HA and NA. Cannot bind NP without genomic RNA.</text>
</comment>
<comment type="subcellular location">
    <subcellularLocation>
        <location evidence="1">Virion membrane</location>
        <topology evidence="1">Peripheral membrane protein</topology>
        <orientation evidence="1">Cytoplasmic side</orientation>
    </subcellularLocation>
    <subcellularLocation>
        <location evidence="1">Host nucleus</location>
    </subcellularLocation>
</comment>
<comment type="alternative products">
    <event type="alternative splicing"/>
    <isoform>
        <id>P05776-1</id>
        <name>M1</name>
        <sequence type="displayed"/>
    </isoform>
    <isoform>
        <id>P05779-1</id>
        <name>M2</name>
        <sequence type="external"/>
    </isoform>
    <text>Only the first 9 residues are shared by the 2 isoforms.</text>
</comment>
<comment type="miscellaneous">
    <text evidence="1">Most abundant protein in virion. When expressed alone can form virus-like particles in transfected cells.</text>
</comment>
<comment type="similarity">
    <text evidence="1">Belongs to the influenza viruses Matrix protein M1 family.</text>
</comment>
<evidence type="ECO:0000255" key="1">
    <source>
        <dbReference type="HAMAP-Rule" id="MF_04068"/>
    </source>
</evidence>
<protein>
    <recommendedName>
        <fullName evidence="1">Matrix protein 1</fullName>
        <shortName evidence="1">M1</shortName>
    </recommendedName>
</protein>
<name>M1_I30A0</name>
<keyword id="KW-0025">Alternative splicing</keyword>
<keyword id="KW-1048">Host nucleus</keyword>
<keyword id="KW-0472">Membrane</keyword>
<keyword id="KW-0694">RNA-binding</keyword>
<keyword id="KW-0468">Viral matrix protein</keyword>
<keyword id="KW-0946">Virion</keyword>
<gene>
    <name evidence="1" type="primary">M</name>
</gene>
<feature type="chain" id="PRO_0000078869" description="Matrix protein 1">
    <location>
        <begin position="1"/>
        <end position="252"/>
    </location>
</feature>
<feature type="region of interest" description="Membrane-binding" evidence="1">
    <location>
        <begin position="1"/>
        <end position="164"/>
    </location>
</feature>
<feature type="region of interest" description="RNP-binding" evidence="1">
    <location>
        <begin position="165"/>
        <end position="252"/>
    </location>
</feature>
<feature type="short sequence motif" description="Nuclear localization signal" evidence="1">
    <location>
        <begin position="101"/>
        <end position="105"/>
    </location>
</feature>
<proteinExistence type="inferred from homology"/>
<organismHost>
    <name type="scientific">Aves</name>
    <dbReference type="NCBI Taxonomy" id="8782"/>
</organismHost>
<organismHost>
    <name type="scientific">Homo sapiens</name>
    <name type="common">Human</name>
    <dbReference type="NCBI Taxonomy" id="9606"/>
</organismHost>
<organismHost>
    <name type="scientific">Sus scrofa</name>
    <name type="common">Pig</name>
    <dbReference type="NCBI Taxonomy" id="9823"/>
</organismHost>
<organism>
    <name type="scientific">Influenza A virus (strain A/Swine/Iowa/15/1930 H1N1)</name>
    <dbReference type="NCBI Taxonomy" id="380342"/>
    <lineage>
        <taxon>Viruses</taxon>
        <taxon>Riboviria</taxon>
        <taxon>Orthornavirae</taxon>
        <taxon>Negarnaviricota</taxon>
        <taxon>Polyploviricotina</taxon>
        <taxon>Insthoviricetes</taxon>
        <taxon>Articulavirales</taxon>
        <taxon>Orthomyxoviridae</taxon>
        <taxon>Alphainfluenzavirus</taxon>
        <taxon>Alphainfluenzavirus influenzae</taxon>
        <taxon>Influenza A virus</taxon>
    </lineage>
</organism>
<reference key="1">
    <citation type="journal article" date="1984" name="Virology">
        <title>Genetic relatedness between A/Swine/Iowa/15/30(H1N1) and human influenza viruses.</title>
        <authorList>
            <person name="Nakajima K."/>
            <person name="Nobusawa E."/>
            <person name="Nakajima S."/>
        </authorList>
    </citation>
    <scope>NUCLEOTIDE SEQUENCE [GENOMIC RNA]</scope>
</reference>
<accession>P05776</accession>
<dbReference type="EMBL" id="M33045">
    <property type="protein sequence ID" value="AAA43682.1"/>
    <property type="status" value="ALT_SEQ"/>
    <property type="molecule type" value="Genomic_RNA"/>
</dbReference>
<dbReference type="PIR" id="T09279">
    <property type="entry name" value="T09279"/>
</dbReference>
<dbReference type="SMR" id="P05776"/>
<dbReference type="GO" id="GO:0042025">
    <property type="term" value="C:host cell nucleus"/>
    <property type="evidence" value="ECO:0007669"/>
    <property type="project" value="UniProtKB-SubCell"/>
</dbReference>
<dbReference type="GO" id="GO:0016020">
    <property type="term" value="C:membrane"/>
    <property type="evidence" value="ECO:0007669"/>
    <property type="project" value="UniProtKB-KW"/>
</dbReference>
<dbReference type="GO" id="GO:0055036">
    <property type="term" value="C:virion membrane"/>
    <property type="evidence" value="ECO:0007669"/>
    <property type="project" value="UniProtKB-SubCell"/>
</dbReference>
<dbReference type="GO" id="GO:0003723">
    <property type="term" value="F:RNA binding"/>
    <property type="evidence" value="ECO:0007669"/>
    <property type="project" value="UniProtKB-UniRule"/>
</dbReference>
<dbReference type="GO" id="GO:0039660">
    <property type="term" value="F:structural constituent of virion"/>
    <property type="evidence" value="ECO:0007669"/>
    <property type="project" value="UniProtKB-UniRule"/>
</dbReference>
<dbReference type="GO" id="GO:0046761">
    <property type="term" value="P:viral budding from plasma membrane"/>
    <property type="evidence" value="ECO:0007669"/>
    <property type="project" value="UniProtKB-UniRule"/>
</dbReference>
<dbReference type="FunFam" id="1.10.10.180:FF:000001">
    <property type="entry name" value="Matrix protein 1"/>
    <property type="match status" value="1"/>
</dbReference>
<dbReference type="Gene3D" id="1.10.10.180">
    <property type="match status" value="1"/>
</dbReference>
<dbReference type="Gene3D" id="1.20.91.10">
    <property type="match status" value="1"/>
</dbReference>
<dbReference type="HAMAP" id="MF_04068">
    <property type="entry name" value="INFV_M1"/>
    <property type="match status" value="1"/>
</dbReference>
<dbReference type="InterPro" id="IPR036039">
    <property type="entry name" value="Flu_matrix_M1"/>
</dbReference>
<dbReference type="InterPro" id="IPR013188">
    <property type="entry name" value="Flu_matrix_M1_C"/>
</dbReference>
<dbReference type="InterPro" id="IPR001561">
    <property type="entry name" value="Flu_matrix_M1_N"/>
</dbReference>
<dbReference type="InterPro" id="IPR015423">
    <property type="entry name" value="Flu_matrix_M1_N_sub1"/>
</dbReference>
<dbReference type="InterPro" id="IPR015799">
    <property type="entry name" value="Flu_matrix_M1_N_sub2"/>
</dbReference>
<dbReference type="InterPro" id="IPR037533">
    <property type="entry name" value="INFV_M1"/>
</dbReference>
<dbReference type="Pfam" id="PF00598">
    <property type="entry name" value="Flu_M1"/>
    <property type="match status" value="1"/>
</dbReference>
<dbReference type="Pfam" id="PF08289">
    <property type="entry name" value="Flu_M1_C"/>
    <property type="match status" value="1"/>
</dbReference>
<dbReference type="SMART" id="SM00759">
    <property type="entry name" value="Flu_M1_C"/>
    <property type="match status" value="1"/>
</dbReference>
<dbReference type="SUPFAM" id="SSF48145">
    <property type="entry name" value="Influenza virus matrix protein M1"/>
    <property type="match status" value="1"/>
</dbReference>